<keyword id="KW-1185">Reference proteome</keyword>
<keyword id="KW-0677">Repeat</keyword>
<keyword id="KW-0964">Secreted</keyword>
<keyword id="KW-0732">Signal</keyword>
<accession>P0CJ59</accession>
<accession>F4JVK9</accession>
<accession>Q680R8</accession>
<accession>Q9S7J6</accession>
<accession>Q9SUM6</accession>
<reference key="1">
    <citation type="journal article" date="1999" name="Nature">
        <title>Sequence and analysis of chromosome 4 of the plant Arabidopsis thaliana.</title>
        <authorList>
            <person name="Mayer K.F.X."/>
            <person name="Schueller C."/>
            <person name="Wambutt R."/>
            <person name="Murphy G."/>
            <person name="Volckaert G."/>
            <person name="Pohl T."/>
            <person name="Duesterhoeft A."/>
            <person name="Stiekema W."/>
            <person name="Entian K.-D."/>
            <person name="Terryn N."/>
            <person name="Harris B."/>
            <person name="Ansorge W."/>
            <person name="Brandt P."/>
            <person name="Grivell L.A."/>
            <person name="Rieger M."/>
            <person name="Weichselgartner M."/>
            <person name="de Simone V."/>
            <person name="Obermaier B."/>
            <person name="Mache R."/>
            <person name="Mueller M."/>
            <person name="Kreis M."/>
            <person name="Delseny M."/>
            <person name="Puigdomenech P."/>
            <person name="Watson M."/>
            <person name="Schmidtheini T."/>
            <person name="Reichert B."/>
            <person name="Portetelle D."/>
            <person name="Perez-Alonso M."/>
            <person name="Boutry M."/>
            <person name="Bancroft I."/>
            <person name="Vos P."/>
            <person name="Hoheisel J."/>
            <person name="Zimmermann W."/>
            <person name="Wedler H."/>
            <person name="Ridley P."/>
            <person name="Langham S.-A."/>
            <person name="McCullagh B."/>
            <person name="Bilham L."/>
            <person name="Robben J."/>
            <person name="van der Schueren J."/>
            <person name="Grymonprez B."/>
            <person name="Chuang Y.-J."/>
            <person name="Vandenbussche F."/>
            <person name="Braeken M."/>
            <person name="Weltjens I."/>
            <person name="Voet M."/>
            <person name="Bastiaens I."/>
            <person name="Aert R."/>
            <person name="Defoor E."/>
            <person name="Weitzenegger T."/>
            <person name="Bothe G."/>
            <person name="Ramsperger U."/>
            <person name="Hilbert H."/>
            <person name="Braun M."/>
            <person name="Holzer E."/>
            <person name="Brandt A."/>
            <person name="Peters S."/>
            <person name="van Staveren M."/>
            <person name="Dirkse W."/>
            <person name="Mooijman P."/>
            <person name="Klein Lankhorst R."/>
            <person name="Rose M."/>
            <person name="Hauf J."/>
            <person name="Koetter P."/>
            <person name="Berneiser S."/>
            <person name="Hempel S."/>
            <person name="Feldpausch M."/>
            <person name="Lamberth S."/>
            <person name="Van den Daele H."/>
            <person name="De Keyser A."/>
            <person name="Buysshaert C."/>
            <person name="Gielen J."/>
            <person name="Villarroel R."/>
            <person name="De Clercq R."/>
            <person name="van Montagu M."/>
            <person name="Rogers J."/>
            <person name="Cronin A."/>
            <person name="Quail M.A."/>
            <person name="Bray-Allen S."/>
            <person name="Clark L."/>
            <person name="Doggett J."/>
            <person name="Hall S."/>
            <person name="Kay M."/>
            <person name="Lennard N."/>
            <person name="McLay K."/>
            <person name="Mayes R."/>
            <person name="Pettett A."/>
            <person name="Rajandream M.A."/>
            <person name="Lyne M."/>
            <person name="Benes V."/>
            <person name="Rechmann S."/>
            <person name="Borkova D."/>
            <person name="Bloecker H."/>
            <person name="Scharfe M."/>
            <person name="Grimm M."/>
            <person name="Loehnert T.-H."/>
            <person name="Dose S."/>
            <person name="de Haan M."/>
            <person name="Maarse A.C."/>
            <person name="Schaefer M."/>
            <person name="Mueller-Auer S."/>
            <person name="Gabel C."/>
            <person name="Fuchs M."/>
            <person name="Fartmann B."/>
            <person name="Granderath K."/>
            <person name="Dauner D."/>
            <person name="Herzl A."/>
            <person name="Neumann S."/>
            <person name="Argiriou A."/>
            <person name="Vitale D."/>
            <person name="Liguori R."/>
            <person name="Piravandi E."/>
            <person name="Massenet O."/>
            <person name="Quigley F."/>
            <person name="Clabauld G."/>
            <person name="Muendlein A."/>
            <person name="Felber R."/>
            <person name="Schnabl S."/>
            <person name="Hiller R."/>
            <person name="Schmidt W."/>
            <person name="Lecharny A."/>
            <person name="Aubourg S."/>
            <person name="Chefdor F."/>
            <person name="Cooke R."/>
            <person name="Berger C."/>
            <person name="Monfort A."/>
            <person name="Casacuberta E."/>
            <person name="Gibbons T."/>
            <person name="Weber N."/>
            <person name="Vandenbol M."/>
            <person name="Bargues M."/>
            <person name="Terol J."/>
            <person name="Torres A."/>
            <person name="Perez-Perez A."/>
            <person name="Purnelle B."/>
            <person name="Bent E."/>
            <person name="Johnson S."/>
            <person name="Tacon D."/>
            <person name="Jesse T."/>
            <person name="Heijnen L."/>
            <person name="Schwarz S."/>
            <person name="Scholler P."/>
            <person name="Heber S."/>
            <person name="Francs P."/>
            <person name="Bielke C."/>
            <person name="Frishman D."/>
            <person name="Haase D."/>
            <person name="Lemcke K."/>
            <person name="Mewes H.-W."/>
            <person name="Stocker S."/>
            <person name="Zaccaria P."/>
            <person name="Bevan M."/>
            <person name="Wilson R.K."/>
            <person name="de la Bastide M."/>
            <person name="Habermann K."/>
            <person name="Parnell L."/>
            <person name="Dedhia N."/>
            <person name="Gnoj L."/>
            <person name="Schutz K."/>
            <person name="Huang E."/>
            <person name="Spiegel L."/>
            <person name="Sekhon M."/>
            <person name="Murray J."/>
            <person name="Sheet P."/>
            <person name="Cordes M."/>
            <person name="Abu-Threideh J."/>
            <person name="Stoneking T."/>
            <person name="Kalicki J."/>
            <person name="Graves T."/>
            <person name="Harmon G."/>
            <person name="Edwards J."/>
            <person name="Latreille P."/>
            <person name="Courtney L."/>
            <person name="Cloud J."/>
            <person name="Abbott A."/>
            <person name="Scott K."/>
            <person name="Johnson D."/>
            <person name="Minx P."/>
            <person name="Bentley D."/>
            <person name="Fulton B."/>
            <person name="Miller N."/>
            <person name="Greco T."/>
            <person name="Kemp K."/>
            <person name="Kramer J."/>
            <person name="Fulton L."/>
            <person name="Mardis E."/>
            <person name="Dante M."/>
            <person name="Pepin K."/>
            <person name="Hillier L.W."/>
            <person name="Nelson J."/>
            <person name="Spieth J."/>
            <person name="Ryan E."/>
            <person name="Andrews S."/>
            <person name="Geisel C."/>
            <person name="Layman D."/>
            <person name="Du H."/>
            <person name="Ali J."/>
            <person name="Berghoff A."/>
            <person name="Jones K."/>
            <person name="Drone K."/>
            <person name="Cotton M."/>
            <person name="Joshu C."/>
            <person name="Antonoiu B."/>
            <person name="Zidanic M."/>
            <person name="Strong C."/>
            <person name="Sun H."/>
            <person name="Lamar B."/>
            <person name="Yordan C."/>
            <person name="Ma P."/>
            <person name="Zhong J."/>
            <person name="Preston R."/>
            <person name="Vil D."/>
            <person name="Shekher M."/>
            <person name="Matero A."/>
            <person name="Shah R."/>
            <person name="Swaby I.K."/>
            <person name="O'Shaughnessy A."/>
            <person name="Rodriguez M."/>
            <person name="Hoffman J."/>
            <person name="Till S."/>
            <person name="Granat S."/>
            <person name="Shohdy N."/>
            <person name="Hasegawa A."/>
            <person name="Hameed A."/>
            <person name="Lodhi M."/>
            <person name="Johnson A."/>
            <person name="Chen E."/>
            <person name="Marra M.A."/>
            <person name="Martienssen R."/>
            <person name="McCombie W.R."/>
        </authorList>
    </citation>
    <scope>NUCLEOTIDE SEQUENCE [LARGE SCALE GENOMIC DNA]</scope>
    <source>
        <strain>cv. Columbia</strain>
    </source>
</reference>
<reference key="2">
    <citation type="journal article" date="2017" name="Plant J.">
        <title>Araport11: a complete reannotation of the Arabidopsis thaliana reference genome.</title>
        <authorList>
            <person name="Cheng C.Y."/>
            <person name="Krishnakumar V."/>
            <person name="Chan A.P."/>
            <person name="Thibaud-Nissen F."/>
            <person name="Schobel S."/>
            <person name="Town C.D."/>
        </authorList>
    </citation>
    <scope>GENOME REANNOTATION</scope>
    <source>
        <strain>cv. Columbia</strain>
    </source>
</reference>
<reference key="3">
    <citation type="journal article" date="2001" name="Plant Physiol.">
        <title>A superfamily of proteins with novel cysteine-rich repeats.</title>
        <authorList>
            <person name="Chen Z."/>
        </authorList>
    </citation>
    <scope>GENE FAMILY ORGANIZATION</scope>
    <scope>NOMENCLATURE</scope>
</reference>
<protein>
    <recommendedName>
        <fullName>Cysteine-rich repeat secretory protein 52</fullName>
    </recommendedName>
</protein>
<evidence type="ECO:0000255" key="1"/>
<evidence type="ECO:0000255" key="2">
    <source>
        <dbReference type="PROSITE-ProRule" id="PRU00806"/>
    </source>
</evidence>
<evidence type="ECO:0000305" key="3"/>
<proteinExistence type="inferred from homology"/>
<dbReference type="EMBL" id="AL080253">
    <property type="protein sequence ID" value="CAB45821.1"/>
    <property type="status" value="ALT_SEQ"/>
    <property type="molecule type" value="Genomic_DNA"/>
</dbReference>
<dbReference type="EMBL" id="AL161553">
    <property type="protein sequence ID" value="CAB79055.1"/>
    <property type="status" value="ALT_SEQ"/>
    <property type="molecule type" value="Genomic_DNA"/>
</dbReference>
<dbReference type="EMBL" id="CP002687">
    <property type="status" value="NOT_ANNOTATED_CDS"/>
    <property type="molecule type" value="Genomic_DNA"/>
</dbReference>
<dbReference type="PIR" id="T10595">
    <property type="entry name" value="T10595"/>
</dbReference>
<dbReference type="RefSeq" id="NP_001320013.1">
    <property type="nucleotide sequence ID" value="NM_001341449.1"/>
</dbReference>
<dbReference type="RefSeq" id="NP_567608.3">
    <property type="nucleotide sequence ID" value="NM_118177.3"/>
</dbReference>
<dbReference type="RefSeq" id="NP_567609.3">
    <property type="nucleotide sequence ID" value="NM_118178.3"/>
</dbReference>
<dbReference type="RefSeq" id="NP_567610.3">
    <property type="nucleotide sequence ID" value="NM_118179.3"/>
</dbReference>
<dbReference type="RefSeq" id="NP_567611.3">
    <property type="nucleotide sequence ID" value="NM_118180.3"/>
</dbReference>
<dbReference type="RefSeq" id="NP_567612.3">
    <property type="nucleotide sequence ID" value="NM_118181.3"/>
</dbReference>
<dbReference type="RefSeq" id="NP_567614.3">
    <property type="nucleotide sequence ID" value="NM_118183.3"/>
</dbReference>
<dbReference type="SMR" id="P0CJ59"/>
<dbReference type="EnsemblPlants" id="AT4G20580.1">
    <property type="protein sequence ID" value="AT4G20580.1"/>
    <property type="gene ID" value="AT4G20580"/>
</dbReference>
<dbReference type="EnsemblPlants" id="AT4G20590.1">
    <property type="protein sequence ID" value="AT4G20590.1"/>
    <property type="gene ID" value="AT4G20590"/>
</dbReference>
<dbReference type="EnsemblPlants" id="AT4G20600.1">
    <property type="protein sequence ID" value="AT4G20600.1"/>
    <property type="gene ID" value="AT4G20600"/>
</dbReference>
<dbReference type="EnsemblPlants" id="AT4G20610.1">
    <property type="protein sequence ID" value="AT4G20610.1"/>
    <property type="gene ID" value="AT4G20610"/>
</dbReference>
<dbReference type="EnsemblPlants" id="AT4G20620.1">
    <property type="protein sequence ID" value="AT4G20620.1"/>
    <property type="gene ID" value="AT4G20620"/>
</dbReference>
<dbReference type="EnsemblPlants" id="AT4G20630.1">
    <property type="protein sequence ID" value="AT4G20630.1"/>
    <property type="gene ID" value="AT4G20630"/>
</dbReference>
<dbReference type="EnsemblPlants" id="AT4G20640.1">
    <property type="protein sequence ID" value="AT4G20640.1"/>
    <property type="gene ID" value="AT4G20640"/>
</dbReference>
<dbReference type="Gramene" id="AT4G20580.1">
    <property type="protein sequence ID" value="AT4G20580.1"/>
    <property type="gene ID" value="AT4G20580"/>
</dbReference>
<dbReference type="Gramene" id="AT4G20590.1">
    <property type="protein sequence ID" value="AT4G20590.1"/>
    <property type="gene ID" value="AT4G20590"/>
</dbReference>
<dbReference type="Gramene" id="AT4G20600.1">
    <property type="protein sequence ID" value="AT4G20600.1"/>
    <property type="gene ID" value="AT4G20600"/>
</dbReference>
<dbReference type="Gramene" id="AT4G20610.1">
    <property type="protein sequence ID" value="AT4G20610.1"/>
    <property type="gene ID" value="AT4G20610"/>
</dbReference>
<dbReference type="Gramene" id="AT4G20620.1">
    <property type="protein sequence ID" value="AT4G20620.1"/>
    <property type="gene ID" value="AT4G20620"/>
</dbReference>
<dbReference type="Gramene" id="AT4G20630.1">
    <property type="protein sequence ID" value="AT4G20630.1"/>
    <property type="gene ID" value="AT4G20630"/>
</dbReference>
<dbReference type="Gramene" id="AT4G20640.1">
    <property type="protein sequence ID" value="AT4G20640.1"/>
    <property type="gene ID" value="AT4G20640"/>
</dbReference>
<dbReference type="KEGG" id="ath:AT4G20580"/>
<dbReference type="KEGG" id="ath:AT4G20590"/>
<dbReference type="KEGG" id="ath:AT4G20600"/>
<dbReference type="KEGG" id="ath:AT4G20610"/>
<dbReference type="KEGG" id="ath:AT4G20620"/>
<dbReference type="KEGG" id="ath:AT4G20630"/>
<dbReference type="KEGG" id="ath:AT4G20640"/>
<dbReference type="Araport" id="AT4G20550"/>
<dbReference type="TAIR" id="AT4G20550"/>
<dbReference type="HOGENOM" id="CLU_000288_35_0_1"/>
<dbReference type="InParanoid" id="P0CJ59"/>
<dbReference type="OMA" id="FIQVWNI"/>
<dbReference type="PRO" id="PR:P0CJ59"/>
<dbReference type="Proteomes" id="UP000006548">
    <property type="component" value="Chromosome 4"/>
</dbReference>
<dbReference type="ExpressionAtlas" id="P0CJ59">
    <property type="expression patterns" value="baseline"/>
</dbReference>
<dbReference type="GO" id="GO:0005576">
    <property type="term" value="C:extracellular region"/>
    <property type="evidence" value="ECO:0007669"/>
    <property type="project" value="UniProtKB-SubCell"/>
</dbReference>
<dbReference type="CDD" id="cd23509">
    <property type="entry name" value="Gnk2-like"/>
    <property type="match status" value="2"/>
</dbReference>
<dbReference type="FunFam" id="3.30.430.20:FF:000002">
    <property type="entry name" value="Cysteine-rich receptor-like protein kinase 10"/>
    <property type="match status" value="1"/>
</dbReference>
<dbReference type="Gene3D" id="3.30.430.20">
    <property type="entry name" value="Gnk2 domain, C-X8-C-X2-C motif"/>
    <property type="match status" value="2"/>
</dbReference>
<dbReference type="InterPro" id="IPR050581">
    <property type="entry name" value="CRR_secretory_protein"/>
</dbReference>
<dbReference type="InterPro" id="IPR002902">
    <property type="entry name" value="GNK2"/>
</dbReference>
<dbReference type="InterPro" id="IPR038408">
    <property type="entry name" value="GNK2_sf"/>
</dbReference>
<dbReference type="PANTHER" id="PTHR32411:SF54">
    <property type="entry name" value="CYSTEINE-RICH REPEAT SECRETORY PROTEIN 29-RELATED"/>
    <property type="match status" value="1"/>
</dbReference>
<dbReference type="PANTHER" id="PTHR32411">
    <property type="entry name" value="CYSTEINE-RICH REPEAT SECRETORY PROTEIN 38-RELATED"/>
    <property type="match status" value="1"/>
</dbReference>
<dbReference type="Pfam" id="PF01657">
    <property type="entry name" value="Stress-antifung"/>
    <property type="match status" value="2"/>
</dbReference>
<dbReference type="PROSITE" id="PS51473">
    <property type="entry name" value="GNK2"/>
    <property type="match status" value="2"/>
</dbReference>
<feature type="signal peptide" evidence="1">
    <location>
        <begin position="1"/>
        <end position="26"/>
    </location>
</feature>
<feature type="chain" id="PRO_0000403948" description="Cysteine-rich repeat secretory protein 52">
    <location>
        <begin position="27"/>
        <end position="256"/>
    </location>
</feature>
<feature type="domain" description="Gnk2-homologous 1" evidence="2">
    <location>
        <begin position="33"/>
        <end position="136"/>
    </location>
</feature>
<feature type="domain" description="Gnk2-homologous 2" evidence="2">
    <location>
        <begin position="142"/>
        <end position="253"/>
    </location>
</feature>
<organism>
    <name type="scientific">Arabidopsis thaliana</name>
    <name type="common">Mouse-ear cress</name>
    <dbReference type="NCBI Taxonomy" id="3702"/>
    <lineage>
        <taxon>Eukaryota</taxon>
        <taxon>Viridiplantae</taxon>
        <taxon>Streptophyta</taxon>
        <taxon>Embryophyta</taxon>
        <taxon>Tracheophyta</taxon>
        <taxon>Spermatophyta</taxon>
        <taxon>Magnoliopsida</taxon>
        <taxon>eudicotyledons</taxon>
        <taxon>Gunneridae</taxon>
        <taxon>Pentapetalae</taxon>
        <taxon>rosids</taxon>
        <taxon>malvids</taxon>
        <taxon>Brassicales</taxon>
        <taxon>Brassicaceae</taxon>
        <taxon>Camelineae</taxon>
        <taxon>Arabidopsis</taxon>
    </lineage>
</organism>
<gene>
    <name type="primary">CRRSP52</name>
    <name type="ordered locus">At4g20550</name>
    <name type="ORF">F9F13.200</name>
</gene>
<name>CRR52_ARATH</name>
<comment type="subcellular location">
    <subcellularLocation>
        <location evidence="3">Secreted</location>
    </subcellularLocation>
</comment>
<comment type="similarity">
    <text evidence="3">Belongs to the cysteine-rich repeat secretory protein family.</text>
</comment>
<comment type="sequence caution" evidence="3">
    <conflict type="erroneous gene model prediction">
        <sequence resource="EMBL-CDS" id="CAB45821"/>
    </conflict>
</comment>
<comment type="sequence caution" evidence="3">
    <conflict type="erroneous gene model prediction">
        <sequence resource="EMBL-CDS" id="CAB79055"/>
    </conflict>
</comment>
<sequence>MSSVFGSVHILAMIAIQLLLTHSVSSLNLTNAYLHHKCSNTQGKYKQGSAFEKNLNLVLSTITSIGNFRDGFRYTEEGEDPNNVFVMFQCRGDSYWSKCPPCISTAVSGLRRRCPRNKGAIIWYDQCLLKISSVASFNKIDYENDFYLSNPNNMSDRGLFNKETSALLEKLAYKASDRNNLDGKQLVLYAAGEKRIGTKKVYAMVQCTKDLIFTKCFECLEGILRKFPQCCDGKRGGRVFGTSCNFRYELYPFLRN</sequence>